<protein>
    <recommendedName>
        <fullName evidence="1">Large ribosomal subunit protein bL36A</fullName>
    </recommendedName>
    <alternativeName>
        <fullName evidence="2">50S ribosomal protein L36 1</fullName>
    </alternativeName>
</protein>
<name>RL361_RENSM</name>
<feature type="chain" id="PRO_0000344710" description="Large ribosomal subunit protein bL36A">
    <location>
        <begin position="1"/>
        <end position="40"/>
    </location>
</feature>
<accession>A9WMV4</accession>
<reference key="1">
    <citation type="journal article" date="2008" name="J. Bacteriol.">
        <title>Genome sequence of the fish pathogen Renibacterium salmoninarum suggests reductive evolution away from an environmental Arthrobacter ancestor.</title>
        <authorList>
            <person name="Wiens G.D."/>
            <person name="Rockey D.D."/>
            <person name="Wu Z."/>
            <person name="Chang J."/>
            <person name="Levy R."/>
            <person name="Crane S."/>
            <person name="Chen D.S."/>
            <person name="Capri G.R."/>
            <person name="Burnett J.R."/>
            <person name="Sudheesh P.S."/>
            <person name="Schipma M.J."/>
            <person name="Burd H."/>
            <person name="Bhattacharyya A."/>
            <person name="Rhodes L.D."/>
            <person name="Kaul R."/>
            <person name="Strom M.S."/>
        </authorList>
    </citation>
    <scope>NUCLEOTIDE SEQUENCE [LARGE SCALE GENOMIC DNA]</scope>
    <source>
        <strain>ATCC 33209 / DSM 20767 / JCM 11484 / NBRC 15589 / NCIMB 2235</strain>
    </source>
</reference>
<gene>
    <name evidence="1" type="primary">rpmJ1</name>
    <name type="ordered locus">RSal33209_1679</name>
</gene>
<keyword id="KW-1185">Reference proteome</keyword>
<keyword id="KW-0687">Ribonucleoprotein</keyword>
<keyword id="KW-0689">Ribosomal protein</keyword>
<sequence length="40" mass="4577">MKVRNSLSALKKVPGAQIVRRRGRTFVINKLNPRMKARQG</sequence>
<proteinExistence type="inferred from homology"/>
<evidence type="ECO:0000255" key="1">
    <source>
        <dbReference type="HAMAP-Rule" id="MF_00251"/>
    </source>
</evidence>
<evidence type="ECO:0000305" key="2"/>
<organism>
    <name type="scientific">Renibacterium salmoninarum (strain ATCC 33209 / DSM 20767 / JCM 11484 / NBRC 15589 / NCIMB 2235)</name>
    <dbReference type="NCBI Taxonomy" id="288705"/>
    <lineage>
        <taxon>Bacteria</taxon>
        <taxon>Bacillati</taxon>
        <taxon>Actinomycetota</taxon>
        <taxon>Actinomycetes</taxon>
        <taxon>Micrococcales</taxon>
        <taxon>Micrococcaceae</taxon>
        <taxon>Renibacterium</taxon>
    </lineage>
</organism>
<dbReference type="EMBL" id="CP000910">
    <property type="protein sequence ID" value="ABY23415.1"/>
    <property type="status" value="ALT_INIT"/>
    <property type="molecule type" value="Genomic_DNA"/>
</dbReference>
<dbReference type="RefSeq" id="WP_041684580.1">
    <property type="nucleotide sequence ID" value="NC_010168.1"/>
</dbReference>
<dbReference type="SMR" id="A9WMV4"/>
<dbReference type="STRING" id="288705.RSal33209_1679"/>
<dbReference type="KEGG" id="rsa:RSal33209_1679"/>
<dbReference type="eggNOG" id="COG0257">
    <property type="taxonomic scope" value="Bacteria"/>
</dbReference>
<dbReference type="HOGENOM" id="CLU_135723_3_1_11"/>
<dbReference type="Proteomes" id="UP000002007">
    <property type="component" value="Chromosome"/>
</dbReference>
<dbReference type="GO" id="GO:1990904">
    <property type="term" value="C:ribonucleoprotein complex"/>
    <property type="evidence" value="ECO:0007669"/>
    <property type="project" value="UniProtKB-KW"/>
</dbReference>
<dbReference type="GO" id="GO:0005840">
    <property type="term" value="C:ribosome"/>
    <property type="evidence" value="ECO:0007669"/>
    <property type="project" value="UniProtKB-KW"/>
</dbReference>
<dbReference type="GO" id="GO:0003735">
    <property type="term" value="F:structural constituent of ribosome"/>
    <property type="evidence" value="ECO:0007669"/>
    <property type="project" value="InterPro"/>
</dbReference>
<dbReference type="GO" id="GO:0006412">
    <property type="term" value="P:translation"/>
    <property type="evidence" value="ECO:0007669"/>
    <property type="project" value="UniProtKB-UniRule"/>
</dbReference>
<dbReference type="HAMAP" id="MF_00251">
    <property type="entry name" value="Ribosomal_bL36"/>
    <property type="match status" value="1"/>
</dbReference>
<dbReference type="InterPro" id="IPR000473">
    <property type="entry name" value="Ribosomal_bL36"/>
</dbReference>
<dbReference type="InterPro" id="IPR035977">
    <property type="entry name" value="Ribosomal_bL36_sp"/>
</dbReference>
<dbReference type="InterPro" id="IPR047621">
    <property type="entry name" value="Ribosomal_L36_bact"/>
</dbReference>
<dbReference type="NCBIfam" id="NF002021">
    <property type="entry name" value="PRK00831.1"/>
    <property type="match status" value="1"/>
</dbReference>
<dbReference type="PANTHER" id="PTHR47781">
    <property type="entry name" value="50S RIBOSOMAL PROTEIN L36 2"/>
    <property type="match status" value="1"/>
</dbReference>
<dbReference type="PANTHER" id="PTHR47781:SF1">
    <property type="entry name" value="LARGE RIBOSOMAL SUBUNIT PROTEIN BL36B"/>
    <property type="match status" value="1"/>
</dbReference>
<dbReference type="Pfam" id="PF00444">
    <property type="entry name" value="Ribosomal_L36"/>
    <property type="match status" value="1"/>
</dbReference>
<dbReference type="SUPFAM" id="SSF57840">
    <property type="entry name" value="Ribosomal protein L36"/>
    <property type="match status" value="1"/>
</dbReference>
<comment type="similarity">
    <text evidence="1">Belongs to the bacterial ribosomal protein bL36 family.</text>
</comment>
<comment type="sequence caution" evidence="2">
    <conflict type="erroneous initiation">
        <sequence resource="EMBL-CDS" id="ABY23415"/>
    </conflict>
    <text>Extended N-terminus.</text>
</comment>